<sequence length="518" mass="57893">MSQNADKIVDHFNLFKQPDYQEMFKNKQKTFENRLPADQVARGQEWTKTWEYREKNFAREALSVNPDKACQPLGRIFARGFDGTRPFVHGSQGCVAYFRSHFNRHFKEPSSCVSSSMTEDPAVFGGLNNMIDGLAISYSLYKPKMIAVSTTCMAEVIGDDLNAFIKTAKEKGNVPESFDVPFAHTPSFVGSHITGYDNMMKGILTHFWDGKAGTVPALERKPDEKINFIGGFDGYTVGNMREIKRLFSLMNVDYTILGDGSDVWDTPADGEFRMYDGGTTFAEAEAALNAKATVCMQGISTEKTMAYIQEKGQEVVALHCPIGVTGTDHFLQEVSGISGKPISEELKKERGRLVDAIGTSISYLHGKKFAIKGDPDFCLGVAGFLLELGAEPVHVVCTRGNKDWAEKMNALFASSPFGTGCHAYPGKDLWHMRSLVFTEPVDFLIGNSYTKYLERDTGTPMIHIGFPIHDRHHHHRYPIWGYQGAVNVLVWILDRIHLELDRNTLGIGTTDFSYDLVR</sequence>
<feature type="chain" id="PRO_0000153110" description="Nitrogenase molybdenum-iron protein beta chain">
    <location>
        <begin position="1"/>
        <end position="518"/>
    </location>
</feature>
<feature type="binding site" evidence="1">
    <location>
        <position position="70"/>
    </location>
    <ligand>
        <name>[8Fe-7S] cluster</name>
        <dbReference type="ChEBI" id="CHEBI:21143"/>
        <note>ligand shared with alpha chain</note>
    </ligand>
</feature>
<feature type="binding site" evidence="1">
    <location>
        <position position="94"/>
    </location>
    <ligand>
        <name>[8Fe-7S] cluster</name>
        <dbReference type="ChEBI" id="CHEBI:21143"/>
        <note>ligand shared with alpha chain</note>
    </ligand>
</feature>
<feature type="binding site" evidence="1">
    <location>
        <position position="152"/>
    </location>
    <ligand>
        <name>[8Fe-7S] cluster</name>
        <dbReference type="ChEBI" id="CHEBI:21143"/>
        <note>ligand shared with alpha chain</note>
    </ligand>
</feature>
<feature type="binding site" evidence="1">
    <location>
        <position position="187"/>
    </location>
    <ligand>
        <name>[8Fe-7S] cluster</name>
        <dbReference type="ChEBI" id="CHEBI:21143"/>
        <note>ligand shared with alpha chain</note>
    </ligand>
</feature>
<reference key="1">
    <citation type="journal article" date="1988" name="Gene">
        <title>Sequence and structural analysis of the alpha- and beta-dinitrogenase subunits of Thiobacillus ferrooxidans.</title>
        <authorList>
            <person name="Rawlings D.E."/>
        </authorList>
    </citation>
    <scope>NUCLEOTIDE SEQUENCE [GENOMIC DNA]</scope>
    <source>
        <strain>ATCC 33020 / DSM 29468 / JCM 18981 / 11Fe</strain>
    </source>
</reference>
<gene>
    <name type="primary">nifK</name>
</gene>
<evidence type="ECO:0000250" key="1"/>
<evidence type="ECO:0000305" key="2"/>
<organism>
    <name type="scientific">Acidithiobacillus ferridurans</name>
    <dbReference type="NCBI Taxonomy" id="1232575"/>
    <lineage>
        <taxon>Bacteria</taxon>
        <taxon>Pseudomonadati</taxon>
        <taxon>Pseudomonadota</taxon>
        <taxon>Acidithiobacillia</taxon>
        <taxon>Acidithiobacillales</taxon>
        <taxon>Acidithiobacillaceae</taxon>
        <taxon>Acidithiobacillus</taxon>
    </lineage>
</organism>
<comment type="function">
    <text>This molybdenum-iron protein is part of the nitrogenase complex that catalyzes the key enzymatic reactions in nitrogen fixation.</text>
</comment>
<comment type="catalytic activity">
    <reaction>
        <text>N2 + 8 reduced [2Fe-2S]-[ferredoxin] + 16 ATP + 16 H2O = H2 + 8 oxidized [2Fe-2S]-[ferredoxin] + 2 NH4(+) + 16 ADP + 16 phosphate + 6 H(+)</text>
        <dbReference type="Rhea" id="RHEA:21448"/>
        <dbReference type="Rhea" id="RHEA-COMP:10000"/>
        <dbReference type="Rhea" id="RHEA-COMP:10001"/>
        <dbReference type="ChEBI" id="CHEBI:15377"/>
        <dbReference type="ChEBI" id="CHEBI:15378"/>
        <dbReference type="ChEBI" id="CHEBI:17997"/>
        <dbReference type="ChEBI" id="CHEBI:18276"/>
        <dbReference type="ChEBI" id="CHEBI:28938"/>
        <dbReference type="ChEBI" id="CHEBI:30616"/>
        <dbReference type="ChEBI" id="CHEBI:33737"/>
        <dbReference type="ChEBI" id="CHEBI:33738"/>
        <dbReference type="ChEBI" id="CHEBI:43474"/>
        <dbReference type="ChEBI" id="CHEBI:456216"/>
        <dbReference type="EC" id="1.18.6.1"/>
    </reaction>
</comment>
<comment type="cofactor">
    <cofactor evidence="1">
        <name>[8Fe-7S] cluster</name>
        <dbReference type="ChEBI" id="CHEBI:21143"/>
    </cofactor>
    <text evidence="1">Binds 1 [8Fe-7S] cluster per heterodimer.</text>
</comment>
<comment type="subunit">
    <text>Tetramer of two alpha and two beta chains. Forms complex with the iron protein (nitrogenase component 2).</text>
</comment>
<comment type="similarity">
    <text evidence="2">Belongs to the NifD/NifK/NifE/NifN family.</text>
</comment>
<name>NIFK_ACIFI</name>
<proteinExistence type="inferred from homology"/>
<dbReference type="EC" id="1.18.6.1"/>
<dbReference type="EMBL" id="M15238">
    <property type="protein sequence ID" value="AAA27376.1"/>
    <property type="molecule type" value="Genomic_DNA"/>
</dbReference>
<dbReference type="PIR" id="JT0341">
    <property type="entry name" value="NIBCBT"/>
</dbReference>
<dbReference type="SMR" id="P15052"/>
<dbReference type="GO" id="GO:0016612">
    <property type="term" value="C:molybdenum-iron nitrogenase complex"/>
    <property type="evidence" value="ECO:0007669"/>
    <property type="project" value="InterPro"/>
</dbReference>
<dbReference type="GO" id="GO:0005524">
    <property type="term" value="F:ATP binding"/>
    <property type="evidence" value="ECO:0007669"/>
    <property type="project" value="UniProtKB-KW"/>
</dbReference>
<dbReference type="GO" id="GO:0051536">
    <property type="term" value="F:iron-sulfur cluster binding"/>
    <property type="evidence" value="ECO:0007669"/>
    <property type="project" value="UniProtKB-KW"/>
</dbReference>
<dbReference type="GO" id="GO:0046872">
    <property type="term" value="F:metal ion binding"/>
    <property type="evidence" value="ECO:0007669"/>
    <property type="project" value="UniProtKB-KW"/>
</dbReference>
<dbReference type="GO" id="GO:0016163">
    <property type="term" value="F:nitrogenase activity"/>
    <property type="evidence" value="ECO:0007669"/>
    <property type="project" value="UniProtKB-EC"/>
</dbReference>
<dbReference type="GO" id="GO:0009399">
    <property type="term" value="P:nitrogen fixation"/>
    <property type="evidence" value="ECO:0007669"/>
    <property type="project" value="UniProtKB-KW"/>
</dbReference>
<dbReference type="CDD" id="cd01974">
    <property type="entry name" value="Nitrogenase_MoFe_beta"/>
    <property type="match status" value="1"/>
</dbReference>
<dbReference type="Gene3D" id="3.40.50.1980">
    <property type="entry name" value="Nitrogenase molybdenum iron protein domain"/>
    <property type="match status" value="3"/>
</dbReference>
<dbReference type="Gene3D" id="1.20.89.10">
    <property type="entry name" value="Nitrogenase Molybdenum-iron Protein, subunit B, domain 4"/>
    <property type="match status" value="1"/>
</dbReference>
<dbReference type="InterPro" id="IPR050152">
    <property type="entry name" value="ChlB/BchB/BchZ"/>
</dbReference>
<dbReference type="InterPro" id="IPR000510">
    <property type="entry name" value="Nase/OxRdtase_comp1"/>
</dbReference>
<dbReference type="InterPro" id="IPR000318">
    <property type="entry name" value="Nase_comp1_CS"/>
</dbReference>
<dbReference type="InterPro" id="IPR005976">
    <property type="entry name" value="Nase_Mo-Fe_CF_bsu"/>
</dbReference>
<dbReference type="InterPro" id="IPR024564">
    <property type="entry name" value="Nase_Mo-Fe_CF_bsu_N"/>
</dbReference>
<dbReference type="NCBIfam" id="TIGR01286">
    <property type="entry name" value="nifK"/>
    <property type="match status" value="1"/>
</dbReference>
<dbReference type="PANTHER" id="PTHR33712">
    <property type="entry name" value="LIGHT-INDEPENDENT PROTOCHLOROPHYLLIDE REDUCTASE SUBUNIT B"/>
    <property type="match status" value="1"/>
</dbReference>
<dbReference type="PANTHER" id="PTHR33712:SF7">
    <property type="entry name" value="LIGHT-INDEPENDENT PROTOCHLOROPHYLLIDE REDUCTASE SUBUNIT B"/>
    <property type="match status" value="1"/>
</dbReference>
<dbReference type="Pfam" id="PF11844">
    <property type="entry name" value="DUF3364"/>
    <property type="match status" value="1"/>
</dbReference>
<dbReference type="Pfam" id="PF00148">
    <property type="entry name" value="Oxidored_nitro"/>
    <property type="match status" value="1"/>
</dbReference>
<dbReference type="SUPFAM" id="SSF53807">
    <property type="entry name" value="Helical backbone' metal receptor"/>
    <property type="match status" value="1"/>
</dbReference>
<dbReference type="PROSITE" id="PS00699">
    <property type="entry name" value="NITROGENASE_1_1"/>
    <property type="match status" value="1"/>
</dbReference>
<dbReference type="PROSITE" id="PS00090">
    <property type="entry name" value="NITROGENASE_1_2"/>
    <property type="match status" value="1"/>
</dbReference>
<accession>P15052</accession>
<protein>
    <recommendedName>
        <fullName>Nitrogenase molybdenum-iron protein beta chain</fullName>
        <ecNumber>1.18.6.1</ecNumber>
    </recommendedName>
    <alternativeName>
        <fullName>Dinitrogenase</fullName>
    </alternativeName>
    <alternativeName>
        <fullName>Nitrogenase component I</fullName>
    </alternativeName>
</protein>
<keyword id="KW-0067">ATP-binding</keyword>
<keyword id="KW-0408">Iron</keyword>
<keyword id="KW-0411">Iron-sulfur</keyword>
<keyword id="KW-0479">Metal-binding</keyword>
<keyword id="KW-0535">Nitrogen fixation</keyword>
<keyword id="KW-0547">Nucleotide-binding</keyword>
<keyword id="KW-0560">Oxidoreductase</keyword>